<comment type="function">
    <text evidence="2">GTP hydrolase that promotes the GTP-dependent binding of aminoacyl-tRNA to the A-site of ribosomes during protein biosynthesis.</text>
</comment>
<comment type="catalytic activity">
    <reaction evidence="2">
        <text>GTP + H2O = GDP + phosphate + H(+)</text>
        <dbReference type="Rhea" id="RHEA:19669"/>
        <dbReference type="ChEBI" id="CHEBI:15377"/>
        <dbReference type="ChEBI" id="CHEBI:15378"/>
        <dbReference type="ChEBI" id="CHEBI:37565"/>
        <dbReference type="ChEBI" id="CHEBI:43474"/>
        <dbReference type="ChEBI" id="CHEBI:58189"/>
        <dbReference type="EC" id="3.6.5.3"/>
    </reaction>
    <physiologicalReaction direction="left-to-right" evidence="2">
        <dbReference type="Rhea" id="RHEA:19670"/>
    </physiologicalReaction>
</comment>
<comment type="subunit">
    <text evidence="2">Monomer.</text>
</comment>
<comment type="subcellular location">
    <subcellularLocation>
        <location evidence="2">Cytoplasm</location>
    </subcellularLocation>
</comment>
<comment type="similarity">
    <text evidence="2">Belongs to the TRAFAC class translation factor GTPase superfamily. Classic translation factor GTPase family. EF-Tu/EF-1A subfamily.</text>
</comment>
<organism>
    <name type="scientific">Ruegeria sp. (strain TM1040)</name>
    <name type="common">Silicibacter sp.</name>
    <dbReference type="NCBI Taxonomy" id="292414"/>
    <lineage>
        <taxon>Bacteria</taxon>
        <taxon>Pseudomonadati</taxon>
        <taxon>Pseudomonadota</taxon>
        <taxon>Alphaproteobacteria</taxon>
        <taxon>Rhodobacterales</taxon>
        <taxon>Roseobacteraceae</taxon>
        <taxon>Ruegeria</taxon>
    </lineage>
</organism>
<protein>
    <recommendedName>
        <fullName evidence="2">Elongation factor Tu</fullName>
        <shortName evidence="2">EF-Tu</shortName>
        <ecNumber evidence="2">3.6.5.3</ecNumber>
    </recommendedName>
</protein>
<reference key="1">
    <citation type="submission" date="2006-05" db="EMBL/GenBank/DDBJ databases">
        <title>Complete sequence of chromosome of Silicibacter sp. TM1040.</title>
        <authorList>
            <consortium name="US DOE Joint Genome Institute"/>
            <person name="Copeland A."/>
            <person name="Lucas S."/>
            <person name="Lapidus A."/>
            <person name="Barry K."/>
            <person name="Detter J.C."/>
            <person name="Glavina del Rio T."/>
            <person name="Hammon N."/>
            <person name="Israni S."/>
            <person name="Dalin E."/>
            <person name="Tice H."/>
            <person name="Pitluck S."/>
            <person name="Brettin T."/>
            <person name="Bruce D."/>
            <person name="Han C."/>
            <person name="Tapia R."/>
            <person name="Goodwin L."/>
            <person name="Thompson L.S."/>
            <person name="Gilna P."/>
            <person name="Schmutz J."/>
            <person name="Larimer F."/>
            <person name="Land M."/>
            <person name="Hauser L."/>
            <person name="Kyrpides N."/>
            <person name="Kim E."/>
            <person name="Belas R."/>
            <person name="Moran M.A."/>
            <person name="Buchan A."/>
            <person name="Gonzalez J.M."/>
            <person name="Schell M.A."/>
            <person name="Sun F."/>
            <person name="Richardson P."/>
        </authorList>
    </citation>
    <scope>NUCLEOTIDE SEQUENCE [LARGE SCALE GENOMIC DNA]</scope>
    <source>
        <strain>TM1040</strain>
    </source>
</reference>
<accession>Q1GDV0</accession>
<feature type="chain" id="PRO_0000337545" description="Elongation factor Tu">
    <location>
        <begin position="1"/>
        <end position="391"/>
    </location>
</feature>
<feature type="domain" description="tr-type G">
    <location>
        <begin position="10"/>
        <end position="201"/>
    </location>
</feature>
<feature type="region of interest" description="G1" evidence="1">
    <location>
        <begin position="19"/>
        <end position="26"/>
    </location>
</feature>
<feature type="region of interest" description="G2" evidence="1">
    <location>
        <begin position="55"/>
        <end position="59"/>
    </location>
</feature>
<feature type="region of interest" description="G3" evidence="1">
    <location>
        <begin position="76"/>
        <end position="79"/>
    </location>
</feature>
<feature type="region of interest" description="G4" evidence="1">
    <location>
        <begin position="131"/>
        <end position="134"/>
    </location>
</feature>
<feature type="region of interest" description="G5" evidence="1">
    <location>
        <begin position="169"/>
        <end position="171"/>
    </location>
</feature>
<feature type="binding site" evidence="2">
    <location>
        <begin position="19"/>
        <end position="26"/>
    </location>
    <ligand>
        <name>GTP</name>
        <dbReference type="ChEBI" id="CHEBI:37565"/>
    </ligand>
</feature>
<feature type="binding site" evidence="2">
    <location>
        <position position="26"/>
    </location>
    <ligand>
        <name>Mg(2+)</name>
        <dbReference type="ChEBI" id="CHEBI:18420"/>
    </ligand>
</feature>
<feature type="binding site" evidence="2">
    <location>
        <begin position="76"/>
        <end position="80"/>
    </location>
    <ligand>
        <name>GTP</name>
        <dbReference type="ChEBI" id="CHEBI:37565"/>
    </ligand>
</feature>
<feature type="binding site" evidence="2">
    <location>
        <begin position="131"/>
        <end position="134"/>
    </location>
    <ligand>
        <name>GTP</name>
        <dbReference type="ChEBI" id="CHEBI:37565"/>
    </ligand>
</feature>
<dbReference type="EC" id="3.6.5.3" evidence="2"/>
<dbReference type="EMBL" id="CP000377">
    <property type="protein sequence ID" value="ABF62975.1"/>
    <property type="molecule type" value="Genomic_DNA"/>
</dbReference>
<dbReference type="EMBL" id="CP000377">
    <property type="protein sequence ID" value="ABF65166.1"/>
    <property type="molecule type" value="Genomic_DNA"/>
</dbReference>
<dbReference type="RefSeq" id="WP_011537605.1">
    <property type="nucleotide sequence ID" value="NC_008044.1"/>
</dbReference>
<dbReference type="SMR" id="Q1GDV0"/>
<dbReference type="STRING" id="292414.TM1040_0242"/>
<dbReference type="KEGG" id="sit:TM1040_0242"/>
<dbReference type="KEGG" id="sit:TM1040_2434"/>
<dbReference type="eggNOG" id="COG0050">
    <property type="taxonomic scope" value="Bacteria"/>
</dbReference>
<dbReference type="HOGENOM" id="CLU_007265_0_0_5"/>
<dbReference type="OrthoDB" id="9803139at2"/>
<dbReference type="Proteomes" id="UP000000636">
    <property type="component" value="Chromosome"/>
</dbReference>
<dbReference type="GO" id="GO:0005737">
    <property type="term" value="C:cytoplasm"/>
    <property type="evidence" value="ECO:0007669"/>
    <property type="project" value="UniProtKB-SubCell"/>
</dbReference>
<dbReference type="GO" id="GO:0005525">
    <property type="term" value="F:GTP binding"/>
    <property type="evidence" value="ECO:0007669"/>
    <property type="project" value="UniProtKB-UniRule"/>
</dbReference>
<dbReference type="GO" id="GO:0003924">
    <property type="term" value="F:GTPase activity"/>
    <property type="evidence" value="ECO:0007669"/>
    <property type="project" value="InterPro"/>
</dbReference>
<dbReference type="GO" id="GO:0097216">
    <property type="term" value="F:guanosine tetraphosphate binding"/>
    <property type="evidence" value="ECO:0007669"/>
    <property type="project" value="UniProtKB-ARBA"/>
</dbReference>
<dbReference type="GO" id="GO:0003746">
    <property type="term" value="F:translation elongation factor activity"/>
    <property type="evidence" value="ECO:0007669"/>
    <property type="project" value="UniProtKB-UniRule"/>
</dbReference>
<dbReference type="CDD" id="cd01884">
    <property type="entry name" value="EF_Tu"/>
    <property type="match status" value="1"/>
</dbReference>
<dbReference type="CDD" id="cd03697">
    <property type="entry name" value="EFTU_II"/>
    <property type="match status" value="1"/>
</dbReference>
<dbReference type="CDD" id="cd03707">
    <property type="entry name" value="EFTU_III"/>
    <property type="match status" value="1"/>
</dbReference>
<dbReference type="FunFam" id="2.40.30.10:FF:000001">
    <property type="entry name" value="Elongation factor Tu"/>
    <property type="match status" value="1"/>
</dbReference>
<dbReference type="FunFam" id="3.40.50.300:FF:000003">
    <property type="entry name" value="Elongation factor Tu"/>
    <property type="match status" value="1"/>
</dbReference>
<dbReference type="Gene3D" id="3.40.50.300">
    <property type="entry name" value="P-loop containing nucleotide triphosphate hydrolases"/>
    <property type="match status" value="1"/>
</dbReference>
<dbReference type="Gene3D" id="2.40.30.10">
    <property type="entry name" value="Translation factors"/>
    <property type="match status" value="2"/>
</dbReference>
<dbReference type="HAMAP" id="MF_00118_B">
    <property type="entry name" value="EF_Tu_B"/>
    <property type="match status" value="1"/>
</dbReference>
<dbReference type="InterPro" id="IPR041709">
    <property type="entry name" value="EF-Tu_GTP-bd"/>
</dbReference>
<dbReference type="InterPro" id="IPR050055">
    <property type="entry name" value="EF-Tu_GTPase"/>
</dbReference>
<dbReference type="InterPro" id="IPR004161">
    <property type="entry name" value="EFTu-like_2"/>
</dbReference>
<dbReference type="InterPro" id="IPR033720">
    <property type="entry name" value="EFTU_2"/>
</dbReference>
<dbReference type="InterPro" id="IPR031157">
    <property type="entry name" value="G_TR_CS"/>
</dbReference>
<dbReference type="InterPro" id="IPR027417">
    <property type="entry name" value="P-loop_NTPase"/>
</dbReference>
<dbReference type="InterPro" id="IPR005225">
    <property type="entry name" value="Small_GTP-bd"/>
</dbReference>
<dbReference type="InterPro" id="IPR000795">
    <property type="entry name" value="T_Tr_GTP-bd_dom"/>
</dbReference>
<dbReference type="InterPro" id="IPR009000">
    <property type="entry name" value="Transl_B-barrel_sf"/>
</dbReference>
<dbReference type="InterPro" id="IPR009001">
    <property type="entry name" value="Transl_elong_EF1A/Init_IF2_C"/>
</dbReference>
<dbReference type="InterPro" id="IPR004541">
    <property type="entry name" value="Transl_elong_EFTu/EF1A_bac/org"/>
</dbReference>
<dbReference type="InterPro" id="IPR004160">
    <property type="entry name" value="Transl_elong_EFTu/EF1A_C"/>
</dbReference>
<dbReference type="NCBIfam" id="TIGR00485">
    <property type="entry name" value="EF-Tu"/>
    <property type="match status" value="1"/>
</dbReference>
<dbReference type="NCBIfam" id="NF000766">
    <property type="entry name" value="PRK00049.1"/>
    <property type="match status" value="1"/>
</dbReference>
<dbReference type="NCBIfam" id="NF009372">
    <property type="entry name" value="PRK12735.1"/>
    <property type="match status" value="1"/>
</dbReference>
<dbReference type="NCBIfam" id="NF009373">
    <property type="entry name" value="PRK12736.1"/>
    <property type="match status" value="1"/>
</dbReference>
<dbReference type="NCBIfam" id="TIGR00231">
    <property type="entry name" value="small_GTP"/>
    <property type="match status" value="1"/>
</dbReference>
<dbReference type="PANTHER" id="PTHR43721:SF22">
    <property type="entry name" value="ELONGATION FACTOR TU, MITOCHONDRIAL"/>
    <property type="match status" value="1"/>
</dbReference>
<dbReference type="PANTHER" id="PTHR43721">
    <property type="entry name" value="ELONGATION FACTOR TU-RELATED"/>
    <property type="match status" value="1"/>
</dbReference>
<dbReference type="Pfam" id="PF00009">
    <property type="entry name" value="GTP_EFTU"/>
    <property type="match status" value="1"/>
</dbReference>
<dbReference type="Pfam" id="PF03144">
    <property type="entry name" value="GTP_EFTU_D2"/>
    <property type="match status" value="1"/>
</dbReference>
<dbReference type="Pfam" id="PF03143">
    <property type="entry name" value="GTP_EFTU_D3"/>
    <property type="match status" value="1"/>
</dbReference>
<dbReference type="PRINTS" id="PR00315">
    <property type="entry name" value="ELONGATNFCT"/>
</dbReference>
<dbReference type="SUPFAM" id="SSF50465">
    <property type="entry name" value="EF-Tu/eEF-1alpha/eIF2-gamma C-terminal domain"/>
    <property type="match status" value="1"/>
</dbReference>
<dbReference type="SUPFAM" id="SSF52540">
    <property type="entry name" value="P-loop containing nucleoside triphosphate hydrolases"/>
    <property type="match status" value="1"/>
</dbReference>
<dbReference type="SUPFAM" id="SSF50447">
    <property type="entry name" value="Translation proteins"/>
    <property type="match status" value="1"/>
</dbReference>
<dbReference type="PROSITE" id="PS00301">
    <property type="entry name" value="G_TR_1"/>
    <property type="match status" value="1"/>
</dbReference>
<dbReference type="PROSITE" id="PS51722">
    <property type="entry name" value="G_TR_2"/>
    <property type="match status" value="1"/>
</dbReference>
<keyword id="KW-0963">Cytoplasm</keyword>
<keyword id="KW-0251">Elongation factor</keyword>
<keyword id="KW-0342">GTP-binding</keyword>
<keyword id="KW-0378">Hydrolase</keyword>
<keyword id="KW-0460">Magnesium</keyword>
<keyword id="KW-0479">Metal-binding</keyword>
<keyword id="KW-0547">Nucleotide-binding</keyword>
<keyword id="KW-0648">Protein biosynthesis</keyword>
<keyword id="KW-1185">Reference proteome</keyword>
<proteinExistence type="inferred from homology"/>
<sequence>MAKEKFERNKPHVNIGTVGHVDHGKTTLTAAITKYFGDFKAYDQIDGAPEEKARGITISTAHVEYETEGRHYAHVDCPGHADYVKNMITGAAQMDGAILVVNAADGPMPQTREHILLARQVGVPALVVFMNKVDQVDDEELLELVEMEIRELLSSYDFPGDDIPIIAGSALAAMEGRDPEIGENKIKELMAAVDEYIPTPERAVDQPFLMPIEDVFSISGRGTVVTGRVERGVINVGDNIEIVGIKDTTTTTCTGVEMFRKLLDRGEAGDNIGALLRGIDREAVERGQVLCKPGSVTPHTKFEAEAYILTKEEGGRHTPFFANYRPQFYFRTTDVTGTVTLPEGTEMVMPGDNLKFEVELIAPIAMEDGLRFAIREGGRTVGAGVVSKILA</sequence>
<evidence type="ECO:0000250" key="1"/>
<evidence type="ECO:0000255" key="2">
    <source>
        <dbReference type="HAMAP-Rule" id="MF_00118"/>
    </source>
</evidence>
<gene>
    <name evidence="2" type="primary">tuf1</name>
    <name type="ordered locus">TM1040_0242</name>
</gene>
<gene>
    <name evidence="2" type="primary">tuf2</name>
    <name type="ordered locus">TM1040_2434</name>
</gene>
<name>EFTU_RUEST</name>